<reference key="1">
    <citation type="journal article" date="1989" name="Proc. Natl. Acad. Sci. U.S.A.">
        <title>Comparison of homeobox-containing genes of the honeybee and Drosophila.</title>
        <authorList>
            <person name="Walldorf U."/>
            <person name="Fleig R."/>
            <person name="Gehring W.J."/>
        </authorList>
    </citation>
    <scope>NUCLEOTIDE SEQUENCE [GENOMIC DNA]</scope>
</reference>
<comment type="subcellular location">
    <subcellularLocation>
        <location evidence="1">Nucleus</location>
    </subcellularLocation>
</comment>
<comment type="similarity">
    <text evidence="2">Belongs to the Antp homeobox family.</text>
</comment>
<protein>
    <recommendedName>
        <fullName>Homeobox protein H90</fullName>
    </recommendedName>
</protein>
<name>HM90_APIME</name>
<proteinExistence type="inferred from homology"/>
<evidence type="ECO:0000255" key="1">
    <source>
        <dbReference type="PROSITE-ProRule" id="PRU00108"/>
    </source>
</evidence>
<evidence type="ECO:0000305" key="2"/>
<feature type="chain" id="PRO_0000049007" description="Homeobox protein H90">
    <location>
        <begin position="1" status="less than"/>
        <end position="74" status="greater than"/>
    </location>
</feature>
<feature type="DNA-binding region" description="Homeobox" evidence="1">
    <location>
        <begin position="8"/>
        <end position="67"/>
    </location>
</feature>
<feature type="non-terminal residue">
    <location>
        <position position="1"/>
    </location>
</feature>
<feature type="non-terminal residue">
    <location>
        <position position="74"/>
    </location>
</feature>
<accession>P15860</accession>
<sequence>LSHCVPERKRGRQTYTRYQTLELEKEFHYNRYLTRRRRIEIAHALCLTERQIKIWFQNRRMKWKKENARATGTP</sequence>
<dbReference type="EMBL" id="M29493">
    <property type="protein sequence ID" value="AAA27728.1"/>
    <property type="molecule type" value="Genomic_DNA"/>
</dbReference>
<dbReference type="PIR" id="D34510">
    <property type="entry name" value="D34510"/>
</dbReference>
<dbReference type="SMR" id="P15860"/>
<dbReference type="PaxDb" id="7460-GB51292-PA"/>
<dbReference type="eggNOG" id="KOG0489">
    <property type="taxonomic scope" value="Eukaryota"/>
</dbReference>
<dbReference type="InParanoid" id="P15860"/>
<dbReference type="Proteomes" id="UP000005203">
    <property type="component" value="Unplaced"/>
</dbReference>
<dbReference type="GO" id="GO:0005634">
    <property type="term" value="C:nucleus"/>
    <property type="evidence" value="ECO:0007669"/>
    <property type="project" value="UniProtKB-SubCell"/>
</dbReference>
<dbReference type="GO" id="GO:0000981">
    <property type="term" value="F:DNA-binding transcription factor activity, RNA polymerase II-specific"/>
    <property type="evidence" value="ECO:0007669"/>
    <property type="project" value="InterPro"/>
</dbReference>
<dbReference type="GO" id="GO:0000978">
    <property type="term" value="F:RNA polymerase II cis-regulatory region sequence-specific DNA binding"/>
    <property type="evidence" value="ECO:0007669"/>
    <property type="project" value="TreeGrafter"/>
</dbReference>
<dbReference type="GO" id="GO:0009952">
    <property type="term" value="P:anterior/posterior pattern specification"/>
    <property type="evidence" value="ECO:0007669"/>
    <property type="project" value="TreeGrafter"/>
</dbReference>
<dbReference type="CDD" id="cd00086">
    <property type="entry name" value="homeodomain"/>
    <property type="match status" value="1"/>
</dbReference>
<dbReference type="FunFam" id="1.10.10.60:FF:000017">
    <property type="entry name" value="Homeobox protein antennapedia"/>
    <property type="match status" value="1"/>
</dbReference>
<dbReference type="Gene3D" id="1.10.10.60">
    <property type="entry name" value="Homeodomain-like"/>
    <property type="match status" value="1"/>
</dbReference>
<dbReference type="InterPro" id="IPR050296">
    <property type="entry name" value="Antp_homeobox"/>
</dbReference>
<dbReference type="InterPro" id="IPR001356">
    <property type="entry name" value="HD"/>
</dbReference>
<dbReference type="InterPro" id="IPR020479">
    <property type="entry name" value="HD_metazoa"/>
</dbReference>
<dbReference type="InterPro" id="IPR017970">
    <property type="entry name" value="Homeobox_CS"/>
</dbReference>
<dbReference type="InterPro" id="IPR009057">
    <property type="entry name" value="Homeodomain-like_sf"/>
</dbReference>
<dbReference type="PANTHER" id="PTHR45659:SF4">
    <property type="entry name" value="HOMEOBOX PROTEIN ABDOMINAL-A"/>
    <property type="match status" value="1"/>
</dbReference>
<dbReference type="PANTHER" id="PTHR45659">
    <property type="entry name" value="HOMEOBOX PROTEIN HOX"/>
    <property type="match status" value="1"/>
</dbReference>
<dbReference type="Pfam" id="PF00046">
    <property type="entry name" value="Homeodomain"/>
    <property type="match status" value="1"/>
</dbReference>
<dbReference type="PRINTS" id="PR00024">
    <property type="entry name" value="HOMEOBOX"/>
</dbReference>
<dbReference type="SMART" id="SM00389">
    <property type="entry name" value="HOX"/>
    <property type="match status" value="1"/>
</dbReference>
<dbReference type="SUPFAM" id="SSF46689">
    <property type="entry name" value="Homeodomain-like"/>
    <property type="match status" value="1"/>
</dbReference>
<dbReference type="PROSITE" id="PS00027">
    <property type="entry name" value="HOMEOBOX_1"/>
    <property type="match status" value="1"/>
</dbReference>
<dbReference type="PROSITE" id="PS50071">
    <property type="entry name" value="HOMEOBOX_2"/>
    <property type="match status" value="1"/>
</dbReference>
<keyword id="KW-0217">Developmental protein</keyword>
<keyword id="KW-0238">DNA-binding</keyword>
<keyword id="KW-0371">Homeobox</keyword>
<keyword id="KW-0539">Nucleus</keyword>
<keyword id="KW-1185">Reference proteome</keyword>
<organism>
    <name type="scientific">Apis mellifera</name>
    <name type="common">Honeybee</name>
    <dbReference type="NCBI Taxonomy" id="7460"/>
    <lineage>
        <taxon>Eukaryota</taxon>
        <taxon>Metazoa</taxon>
        <taxon>Ecdysozoa</taxon>
        <taxon>Arthropoda</taxon>
        <taxon>Hexapoda</taxon>
        <taxon>Insecta</taxon>
        <taxon>Pterygota</taxon>
        <taxon>Neoptera</taxon>
        <taxon>Endopterygota</taxon>
        <taxon>Hymenoptera</taxon>
        <taxon>Apocrita</taxon>
        <taxon>Aculeata</taxon>
        <taxon>Apoidea</taxon>
        <taxon>Anthophila</taxon>
        <taxon>Apidae</taxon>
        <taxon>Apis</taxon>
    </lineage>
</organism>